<dbReference type="EMBL" id="CP000678">
    <property type="protein sequence ID" value="ABQ87642.1"/>
    <property type="molecule type" value="Genomic_DNA"/>
</dbReference>
<dbReference type="SMR" id="A5UN64"/>
<dbReference type="STRING" id="420247.Msm_1437"/>
<dbReference type="EnsemblBacteria" id="ABQ87642">
    <property type="protein sequence ID" value="ABQ87642"/>
    <property type="gene ID" value="Msm_1437"/>
</dbReference>
<dbReference type="KEGG" id="msi:Msm_1437"/>
<dbReference type="PATRIC" id="fig|420247.28.peg.1430"/>
<dbReference type="eggNOG" id="arCOG04245">
    <property type="taxonomic scope" value="Archaea"/>
</dbReference>
<dbReference type="HOGENOM" id="CLU_058171_3_0_2"/>
<dbReference type="Proteomes" id="UP000001992">
    <property type="component" value="Chromosome"/>
</dbReference>
<dbReference type="GO" id="GO:0015935">
    <property type="term" value="C:small ribosomal subunit"/>
    <property type="evidence" value="ECO:0007669"/>
    <property type="project" value="InterPro"/>
</dbReference>
<dbReference type="GO" id="GO:0003735">
    <property type="term" value="F:structural constituent of ribosome"/>
    <property type="evidence" value="ECO:0007669"/>
    <property type="project" value="InterPro"/>
</dbReference>
<dbReference type="GO" id="GO:0006412">
    <property type="term" value="P:translation"/>
    <property type="evidence" value="ECO:0007669"/>
    <property type="project" value="UniProtKB-UniRule"/>
</dbReference>
<dbReference type="CDD" id="cd01425">
    <property type="entry name" value="RPS2"/>
    <property type="match status" value="1"/>
</dbReference>
<dbReference type="FunFam" id="3.40.50.10490:FF:000030">
    <property type="entry name" value="30S ribosomal protein S2"/>
    <property type="match status" value="1"/>
</dbReference>
<dbReference type="Gene3D" id="3.40.50.10490">
    <property type="entry name" value="Glucose-6-phosphate isomerase like protein, domain 1"/>
    <property type="match status" value="1"/>
</dbReference>
<dbReference type="HAMAP" id="MF_00291_A">
    <property type="entry name" value="Ribosomal_uS2_A"/>
    <property type="match status" value="1"/>
</dbReference>
<dbReference type="InterPro" id="IPR001865">
    <property type="entry name" value="Ribosomal_uS2"/>
</dbReference>
<dbReference type="InterPro" id="IPR023454">
    <property type="entry name" value="Ribosomal_uS2_arc"/>
</dbReference>
<dbReference type="InterPro" id="IPR018130">
    <property type="entry name" value="Ribosomal_uS2_CS"/>
</dbReference>
<dbReference type="InterPro" id="IPR005707">
    <property type="entry name" value="Ribosomal_uS2_euk/arc"/>
</dbReference>
<dbReference type="InterPro" id="IPR023591">
    <property type="entry name" value="Ribosomal_uS2_flav_dom_sf"/>
</dbReference>
<dbReference type="NCBIfam" id="TIGR01012">
    <property type="entry name" value="uS2_euk_arch"/>
    <property type="match status" value="1"/>
</dbReference>
<dbReference type="PANTHER" id="PTHR11489">
    <property type="entry name" value="40S RIBOSOMAL PROTEIN SA"/>
    <property type="match status" value="1"/>
</dbReference>
<dbReference type="Pfam" id="PF00318">
    <property type="entry name" value="Ribosomal_S2"/>
    <property type="match status" value="2"/>
</dbReference>
<dbReference type="PRINTS" id="PR00395">
    <property type="entry name" value="RIBOSOMALS2"/>
</dbReference>
<dbReference type="SUPFAM" id="SSF52313">
    <property type="entry name" value="Ribosomal protein S2"/>
    <property type="match status" value="1"/>
</dbReference>
<dbReference type="PROSITE" id="PS00962">
    <property type="entry name" value="RIBOSOMAL_S2_1"/>
    <property type="match status" value="1"/>
</dbReference>
<dbReference type="PROSITE" id="PS00963">
    <property type="entry name" value="RIBOSOMAL_S2_2"/>
    <property type="match status" value="1"/>
</dbReference>
<comment type="similarity">
    <text evidence="1">Belongs to the universal ribosomal protein uS2 family.</text>
</comment>
<organism>
    <name type="scientific">Methanobrevibacter smithii (strain ATCC 35061 / DSM 861 / OCM 144 / PS)</name>
    <dbReference type="NCBI Taxonomy" id="420247"/>
    <lineage>
        <taxon>Archaea</taxon>
        <taxon>Methanobacteriati</taxon>
        <taxon>Methanobacteriota</taxon>
        <taxon>Methanomada group</taxon>
        <taxon>Methanobacteria</taxon>
        <taxon>Methanobacteriales</taxon>
        <taxon>Methanobacteriaceae</taxon>
        <taxon>Methanobrevibacter</taxon>
    </lineage>
</organism>
<feature type="chain" id="PRO_0000352059" description="Small ribosomal subunit protein uS2">
    <location>
        <begin position="1"/>
        <end position="198"/>
    </location>
</feature>
<evidence type="ECO:0000255" key="1">
    <source>
        <dbReference type="HAMAP-Rule" id="MF_00291"/>
    </source>
</evidence>
<evidence type="ECO:0000305" key="2"/>
<protein>
    <recommendedName>
        <fullName evidence="1">Small ribosomal subunit protein uS2</fullName>
    </recommendedName>
    <alternativeName>
        <fullName evidence="2">30S ribosomal protein S2</fullName>
    </alternativeName>
</protein>
<reference key="1">
    <citation type="journal article" date="2007" name="Proc. Natl. Acad. Sci. U.S.A.">
        <title>Genomic and metabolic adaptations of Methanobrevibacter smithii to the human gut.</title>
        <authorList>
            <person name="Samuel B.S."/>
            <person name="Hansen E.E."/>
            <person name="Manchester J.K."/>
            <person name="Coutinho P.M."/>
            <person name="Henrissat B."/>
            <person name="Fulton R."/>
            <person name="Latreille P."/>
            <person name="Kim K."/>
            <person name="Wilson R.K."/>
            <person name="Gordon J.I."/>
        </authorList>
    </citation>
    <scope>NUCLEOTIDE SEQUENCE [LARGE SCALE GENOMIC DNA]</scope>
    <source>
        <strain>ATCC 35061 / DSM 861 / OCM 144 / PS</strain>
    </source>
</reference>
<keyword id="KW-0687">Ribonucleoprotein</keyword>
<keyword id="KW-0689">Ribosomal protein</keyword>
<accession>A5UN64</accession>
<name>RS2_METS3</name>
<gene>
    <name evidence="1" type="primary">rps2</name>
    <name type="ordered locus">Msm_1437</name>
</gene>
<proteinExistence type="inferred from homology"/>
<sequence>MSELLIELDNYLAAGLHIGTQQKTSDMEKYIFRVRSDGLYVLDIQKTDERIRQIAKLLARYDPEDILVVATRQYGQAPVKKFGEVTGAKTIPGRFIPGTLTNPTYAKFIEPKIIVVTDPRSDAQAVLESKQNGIPVIALCDTENLLSFVDIAIPVNNKGRKAIALVYWLLARQILRERGTIPEDGDLDIEATDFELKF</sequence>